<evidence type="ECO:0000250" key="1"/>
<evidence type="ECO:0000269" key="2">
    <source>
    </source>
</evidence>
<evidence type="ECO:0000269" key="3">
    <source>
    </source>
</evidence>
<evidence type="ECO:0000269" key="4">
    <source>
    </source>
</evidence>
<evidence type="ECO:0000269" key="5">
    <source>
    </source>
</evidence>
<evidence type="ECO:0000269" key="6">
    <source>
    </source>
</evidence>
<evidence type="ECO:0000269" key="7">
    <source>
    </source>
</evidence>
<evidence type="ECO:0000269" key="8">
    <source>
    </source>
</evidence>
<evidence type="ECO:0000269" key="9">
    <source>
    </source>
</evidence>
<evidence type="ECO:0000269" key="10">
    <source>
    </source>
</evidence>
<evidence type="ECO:0000269" key="11">
    <source>
    </source>
</evidence>
<evidence type="ECO:0000269" key="12">
    <source>
    </source>
</evidence>
<evidence type="ECO:0000269" key="13">
    <source>
    </source>
</evidence>
<evidence type="ECO:0000269" key="14">
    <source>
    </source>
</evidence>
<evidence type="ECO:0000269" key="15">
    <source>
    </source>
</evidence>
<evidence type="ECO:0000305" key="16"/>
<evidence type="ECO:0000305" key="17">
    <source>
    </source>
</evidence>
<evidence type="ECO:0000305" key="18">
    <source>
    </source>
</evidence>
<accession>P49177</accession>
<gene>
    <name type="primary">GB1</name>
    <name type="ordered locus">At4g34460</name>
    <name type="ORF">T4L20.40</name>
</gene>
<dbReference type="EMBL" id="U12232">
    <property type="protein sequence ID" value="AAA50445.1"/>
    <property type="molecule type" value="mRNA"/>
</dbReference>
<dbReference type="EMBL" id="AL023094">
    <property type="protein sequence ID" value="CAA18825.1"/>
    <property type="molecule type" value="Genomic_DNA"/>
</dbReference>
<dbReference type="EMBL" id="AL161585">
    <property type="protein sequence ID" value="CAB80163.1"/>
    <property type="molecule type" value="Genomic_DNA"/>
</dbReference>
<dbReference type="EMBL" id="CP002687">
    <property type="protein sequence ID" value="AEE86381.1"/>
    <property type="molecule type" value="Genomic_DNA"/>
</dbReference>
<dbReference type="PIR" id="T05266">
    <property type="entry name" value="T05266"/>
</dbReference>
<dbReference type="RefSeq" id="NP_195172.1">
    <molecule id="P49177-1"/>
    <property type="nucleotide sequence ID" value="NM_119611.5"/>
</dbReference>
<dbReference type="SMR" id="P49177"/>
<dbReference type="BioGRID" id="14879">
    <property type="interactions" value="96"/>
</dbReference>
<dbReference type="DIP" id="DIP-40108N"/>
<dbReference type="FunCoup" id="P49177">
    <property type="interactions" value="2314"/>
</dbReference>
<dbReference type="IntAct" id="P49177">
    <property type="interactions" value="11"/>
</dbReference>
<dbReference type="STRING" id="3702.P49177"/>
<dbReference type="TCDB" id="8.A.92.1.2">
    <property type="family name" value="the g-protein AlphaBetaGama complex (gpc) family"/>
</dbReference>
<dbReference type="PaxDb" id="3702-AT4G34460.1"/>
<dbReference type="EnsemblPlants" id="AT4G34460.1">
    <molecule id="P49177-1"/>
    <property type="protein sequence ID" value="AT4G34460.1"/>
    <property type="gene ID" value="AT4G34460"/>
</dbReference>
<dbReference type="GeneID" id="829597"/>
<dbReference type="Gramene" id="AT4G34460.1">
    <molecule id="P49177-1"/>
    <property type="protein sequence ID" value="AT4G34460.1"/>
    <property type="gene ID" value="AT4G34460"/>
</dbReference>
<dbReference type="KEGG" id="ath:AT4G34460"/>
<dbReference type="Araport" id="AT4G34460"/>
<dbReference type="TAIR" id="AT4G34460">
    <property type="gene designation" value="AGB1"/>
</dbReference>
<dbReference type="eggNOG" id="KOG0286">
    <property type="taxonomic scope" value="Eukaryota"/>
</dbReference>
<dbReference type="InParanoid" id="P49177"/>
<dbReference type="OrthoDB" id="10255630at2759"/>
<dbReference type="PhylomeDB" id="P49177"/>
<dbReference type="PRO" id="PR:P49177"/>
<dbReference type="Proteomes" id="UP000006548">
    <property type="component" value="Chromosome 4"/>
</dbReference>
<dbReference type="ExpressionAtlas" id="P49177">
    <property type="expression patterns" value="baseline and differential"/>
</dbReference>
<dbReference type="GO" id="GO:0080008">
    <property type="term" value="C:Cul4-RING E3 ubiquitin ligase complex"/>
    <property type="evidence" value="ECO:0000353"/>
    <property type="project" value="TAIR"/>
</dbReference>
<dbReference type="GO" id="GO:0005737">
    <property type="term" value="C:cytoplasm"/>
    <property type="evidence" value="ECO:0000314"/>
    <property type="project" value="UniProtKB"/>
</dbReference>
<dbReference type="GO" id="GO:0005783">
    <property type="term" value="C:endoplasmic reticulum"/>
    <property type="evidence" value="ECO:0000314"/>
    <property type="project" value="TAIR"/>
</dbReference>
<dbReference type="GO" id="GO:0005834">
    <property type="term" value="C:heterotrimeric G-protein complex"/>
    <property type="evidence" value="ECO:0000314"/>
    <property type="project" value="UniProtKB"/>
</dbReference>
<dbReference type="GO" id="GO:0005634">
    <property type="term" value="C:nucleus"/>
    <property type="evidence" value="ECO:0007669"/>
    <property type="project" value="UniProtKB-SubCell"/>
</dbReference>
<dbReference type="GO" id="GO:0005886">
    <property type="term" value="C:plasma membrane"/>
    <property type="evidence" value="ECO:0000314"/>
    <property type="project" value="UniProtKB"/>
</dbReference>
<dbReference type="GO" id="GO:0003924">
    <property type="term" value="F:GTPase activity"/>
    <property type="evidence" value="ECO:0000250"/>
    <property type="project" value="TAIR"/>
</dbReference>
<dbReference type="GO" id="GO:0009738">
    <property type="term" value="P:abscisic acid-activated signaling pathway"/>
    <property type="evidence" value="ECO:0007669"/>
    <property type="project" value="UniProtKB-KW"/>
</dbReference>
<dbReference type="GO" id="GO:0050832">
    <property type="term" value="P:defense response to fungus"/>
    <property type="evidence" value="ECO:0000315"/>
    <property type="project" value="TAIR"/>
</dbReference>
<dbReference type="GO" id="GO:0030968">
    <property type="term" value="P:endoplasmic reticulum unfolded protein response"/>
    <property type="evidence" value="ECO:0000315"/>
    <property type="project" value="TAIR"/>
</dbReference>
<dbReference type="GO" id="GO:0010154">
    <property type="term" value="P:fruit development"/>
    <property type="evidence" value="ECO:0000315"/>
    <property type="project" value="TAIR"/>
</dbReference>
<dbReference type="GO" id="GO:0007186">
    <property type="term" value="P:G protein-coupled receptor signaling pathway"/>
    <property type="evidence" value="ECO:0007669"/>
    <property type="project" value="EnsemblPlants"/>
</dbReference>
<dbReference type="GO" id="GO:0009867">
    <property type="term" value="P:jasmonic acid mediated signaling pathway"/>
    <property type="evidence" value="ECO:0000315"/>
    <property type="project" value="TAIR"/>
</dbReference>
<dbReference type="GO" id="GO:0048527">
    <property type="term" value="P:lateral root development"/>
    <property type="evidence" value="ECO:0000315"/>
    <property type="project" value="TAIR"/>
</dbReference>
<dbReference type="GO" id="GO:1905392">
    <property type="term" value="P:plant organ morphogenesis"/>
    <property type="evidence" value="ECO:0000315"/>
    <property type="project" value="TAIR"/>
</dbReference>
<dbReference type="GO" id="GO:0072593">
    <property type="term" value="P:reactive oxygen species metabolic process"/>
    <property type="evidence" value="ECO:0000315"/>
    <property type="project" value="TAIR"/>
</dbReference>
<dbReference type="GO" id="GO:2000280">
    <property type="term" value="P:regulation of root development"/>
    <property type="evidence" value="ECO:0000316"/>
    <property type="project" value="UniProtKB"/>
</dbReference>
<dbReference type="GO" id="GO:0009723">
    <property type="term" value="P:response to ethylene"/>
    <property type="evidence" value="ECO:0000315"/>
    <property type="project" value="TAIR"/>
</dbReference>
<dbReference type="GO" id="GO:0048364">
    <property type="term" value="P:root development"/>
    <property type="evidence" value="ECO:0000315"/>
    <property type="project" value="TAIR"/>
</dbReference>
<dbReference type="GO" id="GO:0009845">
    <property type="term" value="P:seed germination"/>
    <property type="evidence" value="ECO:0000315"/>
    <property type="project" value="TAIR"/>
</dbReference>
<dbReference type="GO" id="GO:0010118">
    <property type="term" value="P:stomatal movement"/>
    <property type="evidence" value="ECO:0000316"/>
    <property type="project" value="TAIR"/>
</dbReference>
<dbReference type="CDD" id="cd00200">
    <property type="entry name" value="WD40"/>
    <property type="match status" value="1"/>
</dbReference>
<dbReference type="FunFam" id="2.130.10.10:FF:000580">
    <property type="entry name" value="Guanine nucleotide-binding protein subunit beta"/>
    <property type="match status" value="1"/>
</dbReference>
<dbReference type="Gene3D" id="2.130.10.10">
    <property type="entry name" value="YVTN repeat-like/Quinoprotein amine dehydrogenase"/>
    <property type="match status" value="1"/>
</dbReference>
<dbReference type="InterPro" id="IPR020472">
    <property type="entry name" value="G-protein_beta_WD-40_rep"/>
</dbReference>
<dbReference type="InterPro" id="IPR001632">
    <property type="entry name" value="Gprotein_B"/>
</dbReference>
<dbReference type="InterPro" id="IPR016346">
    <property type="entry name" value="Guanine_nucleotide-bd_bsu"/>
</dbReference>
<dbReference type="InterPro" id="IPR015943">
    <property type="entry name" value="WD40/YVTN_repeat-like_dom_sf"/>
</dbReference>
<dbReference type="InterPro" id="IPR019775">
    <property type="entry name" value="WD40_repeat_CS"/>
</dbReference>
<dbReference type="InterPro" id="IPR036322">
    <property type="entry name" value="WD40_repeat_dom_sf"/>
</dbReference>
<dbReference type="InterPro" id="IPR001680">
    <property type="entry name" value="WD40_rpt"/>
</dbReference>
<dbReference type="PANTHER" id="PTHR19850">
    <property type="entry name" value="GUANINE NUCLEOTIDE-BINDING PROTEIN BETA G PROTEIN BETA"/>
    <property type="match status" value="1"/>
</dbReference>
<dbReference type="Pfam" id="PF25391">
    <property type="entry name" value="WD40_Gbeta"/>
    <property type="match status" value="1"/>
</dbReference>
<dbReference type="PIRSF" id="PIRSF002394">
    <property type="entry name" value="GN-bd_beta"/>
    <property type="match status" value="1"/>
</dbReference>
<dbReference type="PRINTS" id="PR00319">
    <property type="entry name" value="GPROTEINB"/>
</dbReference>
<dbReference type="PRINTS" id="PR00320">
    <property type="entry name" value="GPROTEINBRPT"/>
</dbReference>
<dbReference type="SMART" id="SM00320">
    <property type="entry name" value="WD40"/>
    <property type="match status" value="7"/>
</dbReference>
<dbReference type="SUPFAM" id="SSF50978">
    <property type="entry name" value="WD40 repeat-like"/>
    <property type="match status" value="1"/>
</dbReference>
<dbReference type="PROSITE" id="PS00678">
    <property type="entry name" value="WD_REPEATS_1"/>
    <property type="match status" value="2"/>
</dbReference>
<dbReference type="PROSITE" id="PS50082">
    <property type="entry name" value="WD_REPEATS_2"/>
    <property type="match status" value="5"/>
</dbReference>
<dbReference type="PROSITE" id="PS50294">
    <property type="entry name" value="WD_REPEATS_REGION"/>
    <property type="match status" value="1"/>
</dbReference>
<proteinExistence type="evidence at protein level"/>
<name>GBB_ARATH</name>
<sequence length="377" mass="41006">MSVSELKERHAVATETVNNLRDQLRQRRLQLLDTDVARYSAAQGRTRVSFGATDLVCCRTLQGHTGKVYSLDWTPERNRIVSASQDGRLIVWNALTSQKTHAIKLPCAWVMTCAFSPNGQSVACGGLDSVCSIFSLSSTADKDGTVPVSRMLTGHRGYVSCCQYVPNEDAHLITSSGDQTCILWDVTTGLKTSVFGGEFQSGHTADVLSVSISGSNPNWFISGSCDSTARLWDTRAASRAVRTFHGHEGDVNTVKFFPDGYRFGTGSDDGTCRLYDIRTGHQLQVYQPHGDGENGPVTSIAFSVSGRLLFAGYASNNTCYVWDTLLGEVVLDLGLQQDSHRNRISCLGLSADGSALCTGSWDSNLKIWAFGGHRRVI</sequence>
<protein>
    <recommendedName>
        <fullName>Guanine nucleotide-binding protein subunit beta</fullName>
    </recommendedName>
    <alternativeName>
        <fullName>AGB1</fullName>
    </alternativeName>
    <alternativeName>
        <fullName>transducin</fullName>
    </alternativeName>
</protein>
<keyword id="KW-0938">Abscisic acid signaling pathway</keyword>
<keyword id="KW-0025">Alternative splicing</keyword>
<keyword id="KW-1003">Cell membrane</keyword>
<keyword id="KW-0963">Cytoplasm</keyword>
<keyword id="KW-0472">Membrane</keyword>
<keyword id="KW-0539">Nucleus</keyword>
<keyword id="KW-0611">Plant defense</keyword>
<keyword id="KW-1185">Reference proteome</keyword>
<keyword id="KW-0677">Repeat</keyword>
<keyword id="KW-0807">Transducer</keyword>
<keyword id="KW-0853">WD repeat</keyword>
<reference key="1">
    <citation type="journal article" date="1994" name="Proc. Natl. Acad. Sci. U.S.A.">
        <title>Isolation of cDNAs encoding guanine nucleotide-binding protein beta-subunit homologues from maize (ZGB1) and Arabidopsis (AGB1).</title>
        <authorList>
            <person name="Weiss C.A."/>
            <person name="Garnaat C.W."/>
            <person name="Mukai K."/>
            <person name="Hu Y."/>
            <person name="Ma H."/>
        </authorList>
    </citation>
    <scope>NUCLEOTIDE SEQUENCE [MRNA]</scope>
    <source>
        <strain>cv. Columbia</strain>
    </source>
</reference>
<reference key="2">
    <citation type="journal article" date="1999" name="Nature">
        <title>Sequence and analysis of chromosome 4 of the plant Arabidopsis thaliana.</title>
        <authorList>
            <person name="Mayer K.F.X."/>
            <person name="Schueller C."/>
            <person name="Wambutt R."/>
            <person name="Murphy G."/>
            <person name="Volckaert G."/>
            <person name="Pohl T."/>
            <person name="Duesterhoeft A."/>
            <person name="Stiekema W."/>
            <person name="Entian K.-D."/>
            <person name="Terryn N."/>
            <person name="Harris B."/>
            <person name="Ansorge W."/>
            <person name="Brandt P."/>
            <person name="Grivell L.A."/>
            <person name="Rieger M."/>
            <person name="Weichselgartner M."/>
            <person name="de Simone V."/>
            <person name="Obermaier B."/>
            <person name="Mache R."/>
            <person name="Mueller M."/>
            <person name="Kreis M."/>
            <person name="Delseny M."/>
            <person name="Puigdomenech P."/>
            <person name="Watson M."/>
            <person name="Schmidtheini T."/>
            <person name="Reichert B."/>
            <person name="Portetelle D."/>
            <person name="Perez-Alonso M."/>
            <person name="Boutry M."/>
            <person name="Bancroft I."/>
            <person name="Vos P."/>
            <person name="Hoheisel J."/>
            <person name="Zimmermann W."/>
            <person name="Wedler H."/>
            <person name="Ridley P."/>
            <person name="Langham S.-A."/>
            <person name="McCullagh B."/>
            <person name="Bilham L."/>
            <person name="Robben J."/>
            <person name="van der Schueren J."/>
            <person name="Grymonprez B."/>
            <person name="Chuang Y.-J."/>
            <person name="Vandenbussche F."/>
            <person name="Braeken M."/>
            <person name="Weltjens I."/>
            <person name="Voet M."/>
            <person name="Bastiaens I."/>
            <person name="Aert R."/>
            <person name="Defoor E."/>
            <person name="Weitzenegger T."/>
            <person name="Bothe G."/>
            <person name="Ramsperger U."/>
            <person name="Hilbert H."/>
            <person name="Braun M."/>
            <person name="Holzer E."/>
            <person name="Brandt A."/>
            <person name="Peters S."/>
            <person name="van Staveren M."/>
            <person name="Dirkse W."/>
            <person name="Mooijman P."/>
            <person name="Klein Lankhorst R."/>
            <person name="Rose M."/>
            <person name="Hauf J."/>
            <person name="Koetter P."/>
            <person name="Berneiser S."/>
            <person name="Hempel S."/>
            <person name="Feldpausch M."/>
            <person name="Lamberth S."/>
            <person name="Van den Daele H."/>
            <person name="De Keyser A."/>
            <person name="Buysshaert C."/>
            <person name="Gielen J."/>
            <person name="Villarroel R."/>
            <person name="De Clercq R."/>
            <person name="van Montagu M."/>
            <person name="Rogers J."/>
            <person name="Cronin A."/>
            <person name="Quail M.A."/>
            <person name="Bray-Allen S."/>
            <person name="Clark L."/>
            <person name="Doggett J."/>
            <person name="Hall S."/>
            <person name="Kay M."/>
            <person name="Lennard N."/>
            <person name="McLay K."/>
            <person name="Mayes R."/>
            <person name="Pettett A."/>
            <person name="Rajandream M.A."/>
            <person name="Lyne M."/>
            <person name="Benes V."/>
            <person name="Rechmann S."/>
            <person name="Borkova D."/>
            <person name="Bloecker H."/>
            <person name="Scharfe M."/>
            <person name="Grimm M."/>
            <person name="Loehnert T.-H."/>
            <person name="Dose S."/>
            <person name="de Haan M."/>
            <person name="Maarse A.C."/>
            <person name="Schaefer M."/>
            <person name="Mueller-Auer S."/>
            <person name="Gabel C."/>
            <person name="Fuchs M."/>
            <person name="Fartmann B."/>
            <person name="Granderath K."/>
            <person name="Dauner D."/>
            <person name="Herzl A."/>
            <person name="Neumann S."/>
            <person name="Argiriou A."/>
            <person name="Vitale D."/>
            <person name="Liguori R."/>
            <person name="Piravandi E."/>
            <person name="Massenet O."/>
            <person name="Quigley F."/>
            <person name="Clabauld G."/>
            <person name="Muendlein A."/>
            <person name="Felber R."/>
            <person name="Schnabl S."/>
            <person name="Hiller R."/>
            <person name="Schmidt W."/>
            <person name="Lecharny A."/>
            <person name="Aubourg S."/>
            <person name="Chefdor F."/>
            <person name="Cooke R."/>
            <person name="Berger C."/>
            <person name="Monfort A."/>
            <person name="Casacuberta E."/>
            <person name="Gibbons T."/>
            <person name="Weber N."/>
            <person name="Vandenbol M."/>
            <person name="Bargues M."/>
            <person name="Terol J."/>
            <person name="Torres A."/>
            <person name="Perez-Perez A."/>
            <person name="Purnelle B."/>
            <person name="Bent E."/>
            <person name="Johnson S."/>
            <person name="Tacon D."/>
            <person name="Jesse T."/>
            <person name="Heijnen L."/>
            <person name="Schwarz S."/>
            <person name="Scholler P."/>
            <person name="Heber S."/>
            <person name="Francs P."/>
            <person name="Bielke C."/>
            <person name="Frishman D."/>
            <person name="Haase D."/>
            <person name="Lemcke K."/>
            <person name="Mewes H.-W."/>
            <person name="Stocker S."/>
            <person name="Zaccaria P."/>
            <person name="Bevan M."/>
            <person name="Wilson R.K."/>
            <person name="de la Bastide M."/>
            <person name="Habermann K."/>
            <person name="Parnell L."/>
            <person name="Dedhia N."/>
            <person name="Gnoj L."/>
            <person name="Schutz K."/>
            <person name="Huang E."/>
            <person name="Spiegel L."/>
            <person name="Sekhon M."/>
            <person name="Murray J."/>
            <person name="Sheet P."/>
            <person name="Cordes M."/>
            <person name="Abu-Threideh J."/>
            <person name="Stoneking T."/>
            <person name="Kalicki J."/>
            <person name="Graves T."/>
            <person name="Harmon G."/>
            <person name="Edwards J."/>
            <person name="Latreille P."/>
            <person name="Courtney L."/>
            <person name="Cloud J."/>
            <person name="Abbott A."/>
            <person name="Scott K."/>
            <person name="Johnson D."/>
            <person name="Minx P."/>
            <person name="Bentley D."/>
            <person name="Fulton B."/>
            <person name="Miller N."/>
            <person name="Greco T."/>
            <person name="Kemp K."/>
            <person name="Kramer J."/>
            <person name="Fulton L."/>
            <person name="Mardis E."/>
            <person name="Dante M."/>
            <person name="Pepin K."/>
            <person name="Hillier L.W."/>
            <person name="Nelson J."/>
            <person name="Spieth J."/>
            <person name="Ryan E."/>
            <person name="Andrews S."/>
            <person name="Geisel C."/>
            <person name="Layman D."/>
            <person name="Du H."/>
            <person name="Ali J."/>
            <person name="Berghoff A."/>
            <person name="Jones K."/>
            <person name="Drone K."/>
            <person name="Cotton M."/>
            <person name="Joshu C."/>
            <person name="Antonoiu B."/>
            <person name="Zidanic M."/>
            <person name="Strong C."/>
            <person name="Sun H."/>
            <person name="Lamar B."/>
            <person name="Yordan C."/>
            <person name="Ma P."/>
            <person name="Zhong J."/>
            <person name="Preston R."/>
            <person name="Vil D."/>
            <person name="Shekher M."/>
            <person name="Matero A."/>
            <person name="Shah R."/>
            <person name="Swaby I.K."/>
            <person name="O'Shaughnessy A."/>
            <person name="Rodriguez M."/>
            <person name="Hoffman J."/>
            <person name="Till S."/>
            <person name="Granat S."/>
            <person name="Shohdy N."/>
            <person name="Hasegawa A."/>
            <person name="Hameed A."/>
            <person name="Lodhi M."/>
            <person name="Johnson A."/>
            <person name="Chen E."/>
            <person name="Marra M.A."/>
            <person name="Martienssen R."/>
            <person name="McCombie W.R."/>
        </authorList>
    </citation>
    <scope>NUCLEOTIDE SEQUENCE [LARGE SCALE GENOMIC DNA]</scope>
    <source>
        <strain>cv. Columbia</strain>
    </source>
</reference>
<reference key="3">
    <citation type="journal article" date="2017" name="Plant J.">
        <title>Araport11: a complete reannotation of the Arabidopsis thaliana reference genome.</title>
        <authorList>
            <person name="Cheng C.Y."/>
            <person name="Krishnakumar V."/>
            <person name="Chan A.P."/>
            <person name="Thibaud-Nissen F."/>
            <person name="Schobel S."/>
            <person name="Town C.D."/>
        </authorList>
    </citation>
    <scope>GENOME REANNOTATION</scope>
    <source>
        <strain>cv. Columbia</strain>
    </source>
</reference>
<reference key="4">
    <citation type="journal article" date="2000" name="Proc. Natl. Acad. Sci. U.S.A.">
        <title>Completing the heterotrimer: isolation and characterization of an Arabidopsis thaliana G protein gamma-subunit cDNA.</title>
        <authorList>
            <person name="Mason M.G."/>
            <person name="Botella J.R."/>
        </authorList>
    </citation>
    <scope>INTERACTION WITH GG1</scope>
    <source>
        <strain>cv. Columbia</strain>
    </source>
</reference>
<reference key="5">
    <citation type="journal article" date="2001" name="Biochim. Biophys. Acta">
        <title>Isolation of a novel G-protein gamma-subunit from Arabidopsis thaliana and its interaction with Gbeta.</title>
        <authorList>
            <person name="Mason M.G."/>
            <person name="Botella J.R."/>
        </authorList>
    </citation>
    <scope>INTERACTION WITH GG2</scope>
    <source>
        <strain>cv. Columbia</strain>
    </source>
</reference>
<reference key="6">
    <citation type="journal article" date="2006" name="J. Cell Sci.">
        <title>Plant G protein heterotrimers require dual lipidation motifs of Galpha and Ggamma and do not dissociate upon activation.</title>
        <authorList>
            <person name="Adjobo-Hermans M.J.W."/>
            <person name="Goedhart J."/>
            <person name="Gadella T.W.J. Jr."/>
        </authorList>
    </citation>
    <scope>SUBUNIT</scope>
    <scope>SUBCELLULAR LOCATION</scope>
</reference>
<reference key="7">
    <citation type="journal article" date="2006" name="Plant Physiol.">
        <title>G-protein complex mutants are hypersensitive to abscisic acid regulation of germination and postgermination development.</title>
        <authorList>
            <person name="Pandey S."/>
            <person name="Chen J.-G."/>
            <person name="Jones A.M."/>
            <person name="Assmann S.M."/>
        </authorList>
    </citation>
    <scope>RETRACTED PAPER</scope>
    <source>
        <strain>cv. Columbia</strain>
    </source>
</reference>
<reference key="8">
    <citation type="journal article" date="2019" name="Plant Physiol.">
        <authorList>
            <person name="Pandey S."/>
            <person name="Chen J.-G."/>
            <person name="Jones A.M."/>
            <person name="Assmann S.M."/>
        </authorList>
    </citation>
    <scope>RETRACTION NOTICE OF PUBMED:16581874</scope>
</reference>
<reference key="9">
    <citation type="journal article" date="2007" name="Plant Cell">
        <title>Heterotrimeric G protein gamma subunits provide functional selectivity in Gbetagamma dimer signaling in Arabidopsis.</title>
        <authorList>
            <person name="Trusov Y."/>
            <person name="Rookes J.E."/>
            <person name="Tilbrook K."/>
            <person name="Chakravorty D."/>
            <person name="Mason M.G."/>
            <person name="Anderson D."/>
            <person name="Chen J.-G."/>
            <person name="Jones A.M."/>
            <person name="Botella J.R."/>
        </authorList>
    </citation>
    <scope>FUNCTION</scope>
    <scope>DISRUPTION PHENOTYPE</scope>
    <scope>SUBUNIT</scope>
    <scope>TISSUE SPECIFICITY</scope>
    <scope>INDUCTION BY ALTERNARIA BRASSICICOLA AND FUSARIUM OXYSPORUM</scope>
    <source>
        <strain>cv. Columbia</strain>
    </source>
</reference>
<reference key="10">
    <citation type="journal article" date="2007" name="Plant Cell Rep.">
        <title>Expression analysis and subcellular localization of the Arabidopsis thaliana G-protein beta-subunit AGB1.</title>
        <authorList>
            <person name="Anderson D.J."/>
            <person name="Botella J.R."/>
        </authorList>
    </citation>
    <scope>TISSUE SPECIFICITY</scope>
    <scope>SUBCELLULAR LOCATION</scope>
</reference>
<reference key="11">
    <citation type="journal article" date="2008" name="Plant Cell">
        <title>Characterization of Arabidopsis and rice DWD proteins and their roles as substrate receptors for CUL4-RING E3 ubiquitin ligases.</title>
        <authorList>
            <person name="Lee J.H."/>
            <person name="Terzaghi W."/>
            <person name="Gusmaroli G."/>
            <person name="Charron J.B."/>
            <person name="Yoon H.J."/>
            <person name="Chen H."/>
            <person name="He Y.J."/>
            <person name="Xiong Y."/>
            <person name="Deng X.W."/>
        </authorList>
    </citation>
    <scope>DWD MOTIF</scope>
</reference>
<reference key="12">
    <citation type="journal article" date="2008" name="Plant J.">
        <title>Regulation of root-wave response by extra large and conventional G proteins in Arabidopsis thaliana.</title>
        <authorList>
            <person name="Pandey S."/>
            <person name="Monshausen G.B."/>
            <person name="Ding L."/>
            <person name="Assmann S.M."/>
        </authorList>
    </citation>
    <scope>FUNCTION</scope>
    <scope>DISRUPTION PHENOTYPE</scope>
</reference>
<reference key="13">
    <citation type="journal article" date="2008" name="Plant Physiol.">
        <title>Ggamma1 + Ggamma2 not equal to Gbeta: heterotrimeric G protein Ggamma-deficient mutants do not recapitulate all phenotypes of Gbeta-deficient mutants.</title>
        <authorList>
            <person name="Trusov Y."/>
            <person name="Zhang W."/>
            <person name="Assmann S.M."/>
            <person name="Botella J.R."/>
        </authorList>
    </citation>
    <scope>FUNCTION</scope>
    <scope>DISRUPTION PHENOTYPE</scope>
    <scope>TISSUE SPECIFICITY</scope>
    <scope>DEVELOPMENTAL STAGE</scope>
    <source>
        <strain>cv. Columbia</strain>
    </source>
</reference>
<reference key="14">
    <citation type="journal article" date="2009" name="Mol. Plant">
        <title>Arabidopsis extra large G-protein 2 (XLG2) interacts with the Gbeta subunit of heterotrimeric G protein and functions in disease resistance.</title>
        <authorList>
            <person name="Zhu H."/>
            <person name="Li G.J."/>
            <person name="Ding L."/>
            <person name="Cui X."/>
            <person name="Berg H."/>
            <person name="Assmann S.M."/>
            <person name="Xia Y."/>
        </authorList>
    </citation>
    <scope>INTERACTION WITH XLG2</scope>
</reference>
<reference key="15">
    <citation type="journal article" date="2009" name="Plant Cell">
        <title>Arabidopsis N-MYC DOWNREGULATED-LIKE1, a positive regulator of auxin transport in a G protein-mediated pathway.</title>
        <authorList>
            <person name="Mudgil Y."/>
            <person name="Uhrig J.F."/>
            <person name="Zhou J."/>
            <person name="Temple B."/>
            <person name="Jiang K."/>
            <person name="Jones A.M."/>
        </authorList>
    </citation>
    <scope>FUNCTION</scope>
    <scope>DISRUPTION PHENOTYPE</scope>
    <scope>INTERACTION WITH NDL1; NDL2 AND NDL3</scope>
    <source>
        <strain>cv. Columbia</strain>
    </source>
</reference>
<reference key="16">
    <citation type="journal article" date="2010" name="PLoS ONE">
        <title>Glucose attenuation of auxin-mediated bimodality in lateral root formation is partly coupled by the heterotrimeric G protein complex.</title>
        <authorList>
            <person name="Booker K.S."/>
            <person name="Schwarz J."/>
            <person name="Garrett M.B."/>
            <person name="Jones A.M."/>
        </authorList>
    </citation>
    <scope>FUNCTION</scope>
    <scope>DISRUPTION PHENOTYPE</scope>
</reference>
<reference key="17">
    <citation type="journal article" date="2012" name="Mol. Plant">
        <title>Arabidopsis heterotrimeric G-protein regulates cell wall defense and resistance to necrotrophic fungi.</title>
        <authorList>
            <person name="Delgado-Cerezo M."/>
            <person name="Sanchez-Rodriguez C."/>
            <person name="Escudero V."/>
            <person name="Miedes E."/>
            <person name="Fernandez P.V."/>
            <person name="Jorda L."/>
            <person name="Hernandez-Blanco C."/>
            <person name="Sanchez-Vallet A."/>
            <person name="Bednarek P."/>
            <person name="Schulze-Lefert P."/>
            <person name="Somerville S."/>
            <person name="Estevez J.M."/>
            <person name="Persson S."/>
            <person name="Molina A."/>
        </authorList>
    </citation>
    <scope>FUNCTION</scope>
    <scope>DISRUPTION PHENOTYPE</scope>
    <source>
        <strain>cv. Columbia</strain>
    </source>
</reference>
<reference key="18">
    <citation type="journal article" date="2012" name="Nat. Cell Biol.">
        <title>Endocytosis of the seven-transmembrane RGS1 protein activates G-protein-coupled signalling in Arabidopsis.</title>
        <authorList>
            <person name="Urano D."/>
            <person name="Phan N."/>
            <person name="Jones J.C."/>
            <person name="Yang J."/>
            <person name="Huang J."/>
            <person name="Grigston J."/>
            <person name="Taylor J.P."/>
            <person name="Jones A.M."/>
        </authorList>
    </citation>
    <scope>INTERACTION WITH WNK8</scope>
</reference>
<reference key="19">
    <citation type="journal article" date="2015" name="Nature">
        <title>Pathogen-secreted proteases activate a novel plant immune pathway.</title>
        <authorList>
            <person name="Cheng Z."/>
            <person name="Li J.F."/>
            <person name="Niu Y."/>
            <person name="Zhang X.C."/>
            <person name="Woody O.Z."/>
            <person name="Xiong Y."/>
            <person name="Djonovic S."/>
            <person name="Millet Y."/>
            <person name="Bush J."/>
            <person name="McConkey B.J."/>
            <person name="Sheen J."/>
            <person name="Ausubel F.M."/>
        </authorList>
    </citation>
    <scope>INTERACTION WITH RACK1A; RACK1B AND RACK1C</scope>
</reference>
<reference key="20">
    <citation type="journal article" date="2016" name="PLoS Genet.">
        <title>The Arabidopsis receptor kinase ZAR1 is required for zygote asymmetric division and its daughter cell fate.</title>
        <authorList>
            <person name="Yu T.Y."/>
            <person name="Shi D.Q."/>
            <person name="Jia P.F."/>
            <person name="Tang J."/>
            <person name="Li H.J."/>
            <person name="Liu J."/>
            <person name="Yang W.C."/>
        </authorList>
    </citation>
    <scope>FUNCTION</scope>
    <scope>SUBCELLULAR LOCATION</scope>
    <scope>INTERACTION WITH ZAR1</scope>
</reference>
<organism>
    <name type="scientific">Arabidopsis thaliana</name>
    <name type="common">Mouse-ear cress</name>
    <dbReference type="NCBI Taxonomy" id="3702"/>
    <lineage>
        <taxon>Eukaryota</taxon>
        <taxon>Viridiplantae</taxon>
        <taxon>Streptophyta</taxon>
        <taxon>Embryophyta</taxon>
        <taxon>Tracheophyta</taxon>
        <taxon>Spermatophyta</taxon>
        <taxon>Magnoliopsida</taxon>
        <taxon>eudicotyledons</taxon>
        <taxon>Gunneridae</taxon>
        <taxon>Pentapetalae</taxon>
        <taxon>rosids</taxon>
        <taxon>malvids</taxon>
        <taxon>Brassicales</taxon>
        <taxon>Brassicaceae</taxon>
        <taxon>Camelineae</taxon>
        <taxon>Arabidopsis</taxon>
    </lineage>
</organism>
<feature type="chain" id="PRO_0000127722" description="Guanine nucleotide-binding protein subunit beta">
    <location>
        <begin position="1"/>
        <end position="377"/>
    </location>
</feature>
<feature type="repeat" description="WD 1">
    <location>
        <begin position="63"/>
        <end position="93"/>
    </location>
</feature>
<feature type="repeat" description="WD 2">
    <location>
        <begin position="105"/>
        <end position="135"/>
    </location>
</feature>
<feature type="repeat" description="WD 3">
    <location>
        <begin position="154"/>
        <end position="185"/>
    </location>
</feature>
<feature type="repeat" description="WD 4">
    <location>
        <begin position="202"/>
        <end position="233"/>
    </location>
</feature>
<feature type="repeat" description="WD 5">
    <location>
        <begin position="246"/>
        <end position="276"/>
    </location>
</feature>
<feature type="repeat" description="WD 6">
    <location>
        <begin position="292"/>
        <end position="323"/>
    </location>
</feature>
<feature type="repeat" description="WD 7">
    <location>
        <begin position="339"/>
        <end position="369"/>
    </location>
</feature>
<feature type="short sequence motif" description="DWD box 1">
    <location>
        <begin position="220"/>
        <end position="235"/>
    </location>
</feature>
<feature type="short sequence motif" description="DWD box 1">
    <location>
        <begin position="263"/>
        <end position="278"/>
    </location>
</feature>
<comment type="function">
    <text evidence="5 7 8 10 11 12 15">Guanine nucleotide-binding proteins (G proteins) are involved as a modulator or transducer in various transmembrane signaling systems. The beta and gamma chains are required for the GTPase activity, for replacement of GDP by GTP, and for G protein-effector interaction. The heterotrimeric G-protein controls defense responses to necrotrophic and vascular fungi probably by modulating cell wall-related genes expression (e.g. lower xylose content in cell walls); involved in resistance to fungal pathogens such as Alternaria brassicicola and Fusarium oxysporum. Modulates root architecture (e.g. lateral root formation). Acts with XGL3 in the positive regulation of root waving and root skewing. Involved in the asymmetric division of zygote and specification of apical and basal cell lineages (PubMed:27014878).</text>
</comment>
<comment type="subunit">
    <text evidence="2 3 4 5 9 10 13 14 15">G proteins are composed of 3 units, alpha, beta and gamma. Interacts with the gamma subunits GG1 and GG2. The dimers GB1-GG1 and GB1-GG2 interact with NDL1, NDL2 and NDL3. Interacts with WNK8. Interacts with XLG2 (PubMed:11121078, PubMed:11513956, PubMed:17158913, PubMed:17468261, PubMed:19825634, PubMed:19948787, PubMed:22940907). Interacts with RACK1A, RACK1B and RACK1C (PubMed:25731164). Interacts with ZAR1 (via GBeta-binding domain) (PubMed:27014878).</text>
</comment>
<comment type="interaction">
    <interactant intactId="EBI-1632851">
        <id>P49177</id>
    </interactant>
    <interactant intactId="EBI-1750878">
        <id>Q9FDX9</id>
        <label>GG1</label>
    </interactant>
    <organismsDiffer>false</organismsDiffer>
    <experiments>8</experiments>
</comment>
<comment type="interaction">
    <interactant intactId="EBI-1632851">
        <id>P49177</id>
    </interactant>
    <interactant intactId="EBI-1751115">
        <id>Q93V47</id>
        <label>GG2</label>
    </interactant>
    <organismsDiffer>false</organismsDiffer>
    <experiments>2</experiments>
</comment>
<comment type="interaction">
    <interactant intactId="EBI-1632851">
        <id>P49177</id>
    </interactant>
    <interactant intactId="EBI-443890">
        <id>P18064</id>
        <label>GPA1</label>
    </interactant>
    <organismsDiffer>false</organismsDiffer>
    <experiments>4</experiments>
</comment>
<comment type="subcellular location">
    <subcellularLocation>
        <location evidence="4 6 15">Cell membrane</location>
    </subcellularLocation>
    <subcellularLocation>
        <location evidence="4">Cytoplasm</location>
    </subcellularLocation>
    <subcellularLocation>
        <location evidence="6 15">Nucleus</location>
    </subcellularLocation>
    <text evidence="4 15">Localized to the cell membrane when attached to gamma subunits as GG1 and GG2 or to both the plasma membrane and the nucleus when interacting with ZAR1.</text>
</comment>
<comment type="alternative products">
    <event type="alternative splicing"/>
    <isoform>
        <id>P49177-1</id>
        <name>1</name>
        <sequence type="displayed"/>
    </isoform>
    <text>A number of isoforms are produced. According to EST sequences.</text>
</comment>
<comment type="tissue specificity">
    <text evidence="5 6 8">Expressed in seedlings (especially at the hypocotyl/root junction), roots, leaves (restricted to veins and guard cells), and flowers (PubMed:17468261, PubMed:18441222). Also present in hydathods (PubMed:17468261). Expressed in guard cells, mesophyll tissue of cotyledons, trichomes and whole siliques, but not in seeds (PubMed:17492287).</text>
</comment>
<comment type="developmental stage">
    <text evidence="8">In flowers, mostly expressed in stigma and pollen, and moderately present in sepals and stamen filaments. In siliques, observed at both ends, gradually disappearing toward the center.</text>
</comment>
<comment type="induction">
    <text evidence="5">Induced locally by Alternaria brassicicola but systemically by Fusarium oxysporum.</text>
</comment>
<comment type="domain">
    <text evidence="1">The DWD box is required for interaction with DDB1A.</text>
</comment>
<comment type="disruption phenotype">
    <text evidence="5 7 8 10 11 12">Shorter hypocotyls and abnormal roots architecture; more auxin-induced lateral roots. Enhanced susceptibility to necrotrophic and vascular pathogenic fungi, such as Alternaria brassicicola, Plectosphaerella cucumerina and Fusarium oxysporum associated with a disturbed expression of genes involved in cell wall metabolism. Longer and wider primary roots with faster growth. Severely compromised root waving and abnormal root skewing response. Hypersensitivity to ethylene (ACC).</text>
</comment>
<comment type="similarity">
    <text evidence="16">Belongs to the WD repeat G protein beta family.</text>
</comment>
<comment type="caution">
    <text evidence="17 18">An article reported a role as negative regulator of ABA during seed germination; however, this paper was later retracted.</text>
</comment>